<reference key="1">
    <citation type="journal article" date="2003" name="Nat. Biotechnol.">
        <title>The genome sequence of the entomopathogenic bacterium Photorhabdus luminescens.</title>
        <authorList>
            <person name="Duchaud E."/>
            <person name="Rusniok C."/>
            <person name="Frangeul L."/>
            <person name="Buchrieser C."/>
            <person name="Givaudan A."/>
            <person name="Taourit S."/>
            <person name="Bocs S."/>
            <person name="Boursaux-Eude C."/>
            <person name="Chandler M."/>
            <person name="Charles J.-F."/>
            <person name="Dassa E."/>
            <person name="Derose R."/>
            <person name="Derzelle S."/>
            <person name="Freyssinet G."/>
            <person name="Gaudriault S."/>
            <person name="Medigue C."/>
            <person name="Lanois A."/>
            <person name="Powell K."/>
            <person name="Siguier P."/>
            <person name="Vincent R."/>
            <person name="Wingate V."/>
            <person name="Zouine M."/>
            <person name="Glaser P."/>
            <person name="Boemare N."/>
            <person name="Danchin A."/>
            <person name="Kunst F."/>
        </authorList>
    </citation>
    <scope>NUCLEOTIDE SEQUENCE [LARGE SCALE GENOMIC DNA]</scope>
    <source>
        <strain>DSM 15139 / CIP 105565 / TT01</strain>
    </source>
</reference>
<proteinExistence type="inferred from homology"/>
<keyword id="KW-0058">Aromatic hydrocarbons catabolism</keyword>
<keyword id="KW-0223">Dioxygenase</keyword>
<keyword id="KW-0408">Iron</keyword>
<keyword id="KW-0560">Oxidoreductase</keyword>
<keyword id="KW-1185">Reference proteome</keyword>
<name>MHPB_PHOLL</name>
<sequence>MTVKLICTSHTPLMGFGSPPEATEKHVRQVFQQLAEQIKDYDPQLIVIFAPDHFNGFFYDLMPAFCVGVRANAVGDWDIGKGPLNVPENTAKDLISALYDSGIDVAHSWRMQVDHGFTQPLMLLCQNLQRYPTIPIFINCAAKPLPTCRRAVELGRAVGQFLFTTDQRVLLLGSGGLSHDPPIPQMGQVPPEVEEGLIAGRNPTKEARQKRQIRVIEVGKSLARGENIVAPLNPQWDDELLRIFCSGDIRRLASLTEGGIAIQGGKGGQEIRCWIAAFAALSVYGEYKAQRHYYQPIKEWLAGMAMVSAQPVTQIGA</sequence>
<evidence type="ECO:0000255" key="1">
    <source>
        <dbReference type="HAMAP-Rule" id="MF_01653"/>
    </source>
</evidence>
<protein>
    <recommendedName>
        <fullName evidence="1">2,3-dihydroxyphenylpropionate/2,3-dihydroxicinnamic acid 1,2-dioxygenase</fullName>
        <ecNumber evidence="1">1.13.11.16</ecNumber>
    </recommendedName>
    <alternativeName>
        <fullName evidence="1">3-carboxyethylcatechol 2,3-dioxygenase</fullName>
    </alternativeName>
</protein>
<feature type="chain" id="PRO_0000337661" description="2,3-dihydroxyphenylpropionate/2,3-dihydroxicinnamic acid 1,2-dioxygenase">
    <location>
        <begin position="1"/>
        <end position="317"/>
    </location>
</feature>
<feature type="active site" description="Proton donor" evidence="1">
    <location>
        <position position="115"/>
    </location>
</feature>
<feature type="active site" description="Proton acceptor" evidence="1">
    <location>
        <position position="179"/>
    </location>
</feature>
<comment type="function">
    <text evidence="1">Catalyzes the non-heme iron(II)-dependent oxidative cleavage of 2,3-dihydroxyphenylpropionic acid and 2,3-dihydroxicinnamic acid into 2-hydroxy-6-ketononadienedioate and 2-hydroxy-6-ketononatrienedioate, respectively.</text>
</comment>
<comment type="catalytic activity">
    <reaction evidence="1">
        <text>3-(2,3-dihydroxyphenyl)propanoate + O2 = (2Z,4E)-2-hydroxy-6-oxonona-2,4-dienedioate + H(+)</text>
        <dbReference type="Rhea" id="RHEA:23840"/>
        <dbReference type="ChEBI" id="CHEBI:15378"/>
        <dbReference type="ChEBI" id="CHEBI:15379"/>
        <dbReference type="ChEBI" id="CHEBI:46951"/>
        <dbReference type="ChEBI" id="CHEBI:66887"/>
        <dbReference type="EC" id="1.13.11.16"/>
    </reaction>
</comment>
<comment type="catalytic activity">
    <reaction evidence="1">
        <text>(2E)-3-(2,3-dihydroxyphenyl)prop-2-enoate + O2 = (2Z,4E,7E)-2-hydroxy-6-oxonona-2,4,7-trienedioate + H(+)</text>
        <dbReference type="Rhea" id="RHEA:25054"/>
        <dbReference type="ChEBI" id="CHEBI:15378"/>
        <dbReference type="ChEBI" id="CHEBI:15379"/>
        <dbReference type="ChEBI" id="CHEBI:58642"/>
        <dbReference type="ChEBI" id="CHEBI:66888"/>
        <dbReference type="EC" id="1.13.11.16"/>
    </reaction>
</comment>
<comment type="cofactor">
    <cofactor evidence="1">
        <name>Fe(2+)</name>
        <dbReference type="ChEBI" id="CHEBI:29033"/>
    </cofactor>
</comment>
<comment type="pathway">
    <text evidence="1">Aromatic compound metabolism; 3-phenylpropanoate degradation.</text>
</comment>
<comment type="subunit">
    <text evidence="1">Homotetramer.</text>
</comment>
<comment type="similarity">
    <text evidence="1">Belongs to the LigB/MhpB extradiol dioxygenase family.</text>
</comment>
<accession>Q7N4V6</accession>
<dbReference type="EC" id="1.13.11.16" evidence="1"/>
<dbReference type="EMBL" id="BX571866">
    <property type="protein sequence ID" value="CAE14501.1"/>
    <property type="molecule type" value="Genomic_DNA"/>
</dbReference>
<dbReference type="RefSeq" id="WP_011146460.1">
    <property type="nucleotide sequence ID" value="NC_005126.1"/>
</dbReference>
<dbReference type="SMR" id="Q7N4V6"/>
<dbReference type="STRING" id="243265.plu2208"/>
<dbReference type="GeneID" id="48848484"/>
<dbReference type="KEGG" id="plu:plu2208"/>
<dbReference type="eggNOG" id="COG3384">
    <property type="taxonomic scope" value="Bacteria"/>
</dbReference>
<dbReference type="HOGENOM" id="CLU_078149_0_0_6"/>
<dbReference type="OrthoDB" id="8673673at2"/>
<dbReference type="UniPathway" id="UPA00714"/>
<dbReference type="Proteomes" id="UP000002514">
    <property type="component" value="Chromosome"/>
</dbReference>
<dbReference type="GO" id="GO:0047070">
    <property type="term" value="F:3-carboxyethylcatechol 2,3-dioxygenase activity"/>
    <property type="evidence" value="ECO:0007669"/>
    <property type="project" value="UniProtKB-UniRule"/>
</dbReference>
<dbReference type="GO" id="GO:0008198">
    <property type="term" value="F:ferrous iron binding"/>
    <property type="evidence" value="ECO:0007669"/>
    <property type="project" value="InterPro"/>
</dbReference>
<dbReference type="GO" id="GO:0019380">
    <property type="term" value="P:3-phenylpropionate catabolic process"/>
    <property type="evidence" value="ECO:0007669"/>
    <property type="project" value="UniProtKB-UniRule"/>
</dbReference>
<dbReference type="CDD" id="cd07365">
    <property type="entry name" value="MhpB_like"/>
    <property type="match status" value="1"/>
</dbReference>
<dbReference type="Gene3D" id="3.40.830.10">
    <property type="entry name" value="LigB-like"/>
    <property type="match status" value="1"/>
</dbReference>
<dbReference type="HAMAP" id="MF_01653">
    <property type="entry name" value="MhpB"/>
    <property type="match status" value="1"/>
</dbReference>
<dbReference type="InterPro" id="IPR023789">
    <property type="entry name" value="DHPP/DHXA_dioxygenase"/>
</dbReference>
<dbReference type="InterPro" id="IPR004183">
    <property type="entry name" value="Xdiol_dOase_suB"/>
</dbReference>
<dbReference type="NCBIfam" id="NF009909">
    <property type="entry name" value="PRK13370.1-3"/>
    <property type="match status" value="1"/>
</dbReference>
<dbReference type="NCBIfam" id="NF009910">
    <property type="entry name" value="PRK13370.1-4"/>
    <property type="match status" value="1"/>
</dbReference>
<dbReference type="Pfam" id="PF02900">
    <property type="entry name" value="LigB"/>
    <property type="match status" value="1"/>
</dbReference>
<dbReference type="SUPFAM" id="SSF53213">
    <property type="entry name" value="LigB-like"/>
    <property type="match status" value="1"/>
</dbReference>
<organism>
    <name type="scientific">Photorhabdus laumondii subsp. laumondii (strain DSM 15139 / CIP 105565 / TT01)</name>
    <name type="common">Photorhabdus luminescens subsp. laumondii</name>
    <dbReference type="NCBI Taxonomy" id="243265"/>
    <lineage>
        <taxon>Bacteria</taxon>
        <taxon>Pseudomonadati</taxon>
        <taxon>Pseudomonadota</taxon>
        <taxon>Gammaproteobacteria</taxon>
        <taxon>Enterobacterales</taxon>
        <taxon>Morganellaceae</taxon>
        <taxon>Photorhabdus</taxon>
    </lineage>
</organism>
<gene>
    <name evidence="1" type="primary">mhpB</name>
    <name type="ordered locus">plu2208</name>
</gene>